<accession>Q9SRQ7</accession>
<comment type="function">
    <text evidence="2 3 4 5">Non-specific phospholipase C (PLC) which assumes major PLC activity during inorganic phosphate starvation. Substrate preference is phosphatidylcholine (PC), but can also hydrolyze phosphatidylethanolamine (PE) with lower efficiency. Has no activity toward phosphatidic acid (PA). Plays an important role in the supply of both inorganic phosphate and diacylglycerol from membrane-localized phospholipids during phosphate deprivation. May be required for lipid-derived signaling molecules that positively modulate abscisic acid (ABA) response and promote plant tolerance to drought and salt stresses. May be involved in brassinolide-mediated signaling in root development.</text>
</comment>
<comment type="catalytic activity">
    <reaction evidence="2">
        <text>a 1,2-diacyl-sn-glycero-3-phosphocholine + H2O = phosphocholine + a 1,2-diacyl-sn-glycerol + H(+)</text>
        <dbReference type="Rhea" id="RHEA:10604"/>
        <dbReference type="ChEBI" id="CHEBI:15377"/>
        <dbReference type="ChEBI" id="CHEBI:15378"/>
        <dbReference type="ChEBI" id="CHEBI:17815"/>
        <dbReference type="ChEBI" id="CHEBI:57643"/>
        <dbReference type="ChEBI" id="CHEBI:295975"/>
        <dbReference type="EC" id="3.1.4.3"/>
    </reaction>
</comment>
<comment type="subcellular location">
    <subcellularLocation>
        <location evidence="8">Cell membrane</location>
        <topology evidence="8">Peripheral membrane protein</topology>
    </subcellularLocation>
</comment>
<comment type="tissue specificity">
    <text evidence="3">Expressed in root tips, cotyledons, on leaf margins, stems, young anthers and funiculus.</text>
</comment>
<comment type="induction">
    <text evidence="2 3 5">Induced by auxin, zeatin, salt and inorganic phosphate deprivation.</text>
</comment>
<comment type="disruption phenotype">
    <text evidence="2 3 4 5 6">No visible phenotype under normal growth conditions, but mutant plants display decreased ABA sensitivity in seed germination, root elongation, and stomatal movement and have decreased tolerance to high salinity and water deficiency. Root hair elongation defects under low inorganic phosphate conditions.</text>
</comment>
<comment type="similarity">
    <text evidence="7">Belongs to the bacterial phospholipase C family.</text>
</comment>
<gene>
    <name type="primary">NPC4</name>
    <name type="ordered locus">At3g03530</name>
    <name type="ORF">T21P5.5</name>
</gene>
<name>NPC4_ARATH</name>
<dbReference type="EC" id="3.1.4.3"/>
<dbReference type="EMBL" id="AB084293">
    <property type="protein sequence ID" value="BAC22508.1"/>
    <property type="molecule type" value="mRNA"/>
</dbReference>
<dbReference type="EMBL" id="AC009895">
    <property type="protein sequence ID" value="AAF01582.1"/>
    <property type="molecule type" value="Genomic_DNA"/>
</dbReference>
<dbReference type="EMBL" id="CP002686">
    <property type="protein sequence ID" value="AEE73954.1"/>
    <property type="molecule type" value="Genomic_DNA"/>
</dbReference>
<dbReference type="EMBL" id="AY037257">
    <property type="protein sequence ID" value="AAK59858.1"/>
    <property type="molecule type" value="mRNA"/>
</dbReference>
<dbReference type="EMBL" id="AY143947">
    <property type="protein sequence ID" value="AAN28886.1"/>
    <property type="molecule type" value="mRNA"/>
</dbReference>
<dbReference type="RefSeq" id="NP_566206.1">
    <property type="nucleotide sequence ID" value="NM_111224.3"/>
</dbReference>
<dbReference type="PDB" id="8HAV">
    <property type="method" value="X-ray"/>
    <property type="resolution" value="2.10 A"/>
    <property type="chains" value="A/B=1-494"/>
</dbReference>
<dbReference type="PDB" id="8HAW">
    <property type="method" value="X-ray"/>
    <property type="resolution" value="2.10 A"/>
    <property type="chains" value="A/B=1-494"/>
</dbReference>
<dbReference type="PDBsum" id="8HAV"/>
<dbReference type="PDBsum" id="8HAW"/>
<dbReference type="SMR" id="Q9SRQ7"/>
<dbReference type="BioGRID" id="6576">
    <property type="interactions" value="2"/>
</dbReference>
<dbReference type="FunCoup" id="Q9SRQ7">
    <property type="interactions" value="82"/>
</dbReference>
<dbReference type="IntAct" id="Q9SRQ7">
    <property type="interactions" value="1"/>
</dbReference>
<dbReference type="STRING" id="3702.Q9SRQ7"/>
<dbReference type="iPTMnet" id="Q9SRQ7"/>
<dbReference type="PaxDb" id="3702-AT3G03530.1"/>
<dbReference type="ProteomicsDB" id="251119"/>
<dbReference type="DNASU" id="821243"/>
<dbReference type="EnsemblPlants" id="AT3G03530.1">
    <property type="protein sequence ID" value="AT3G03530.1"/>
    <property type="gene ID" value="AT3G03530"/>
</dbReference>
<dbReference type="GeneID" id="821243"/>
<dbReference type="Gramene" id="AT3G03530.1">
    <property type="protein sequence ID" value="AT3G03530.1"/>
    <property type="gene ID" value="AT3G03530"/>
</dbReference>
<dbReference type="KEGG" id="ath:AT3G03530"/>
<dbReference type="Araport" id="AT3G03530"/>
<dbReference type="TAIR" id="AT3G03530">
    <property type="gene designation" value="NPC4"/>
</dbReference>
<dbReference type="eggNOG" id="ENOG502QPJ0">
    <property type="taxonomic scope" value="Eukaryota"/>
</dbReference>
<dbReference type="HOGENOM" id="CLU_029943_1_0_1"/>
<dbReference type="InParanoid" id="Q9SRQ7"/>
<dbReference type="OMA" id="INPECCT"/>
<dbReference type="OrthoDB" id="5135119at2759"/>
<dbReference type="PhylomeDB" id="Q9SRQ7"/>
<dbReference type="BioCyc" id="ARA:AT3G03530-MONOMER"/>
<dbReference type="BioCyc" id="MetaCyc:AT3G03530-MONOMER"/>
<dbReference type="BRENDA" id="3.1.4.3">
    <property type="organism ID" value="399"/>
</dbReference>
<dbReference type="PRO" id="PR:Q9SRQ7"/>
<dbReference type="Proteomes" id="UP000006548">
    <property type="component" value="Chromosome 3"/>
</dbReference>
<dbReference type="ExpressionAtlas" id="Q9SRQ7">
    <property type="expression patterns" value="baseline and differential"/>
</dbReference>
<dbReference type="GO" id="GO:0005886">
    <property type="term" value="C:plasma membrane"/>
    <property type="evidence" value="ECO:0000314"/>
    <property type="project" value="TAIR"/>
</dbReference>
<dbReference type="GO" id="GO:0034480">
    <property type="term" value="F:phosphatidylcholine phospholipase C activity"/>
    <property type="evidence" value="ECO:0007669"/>
    <property type="project" value="UniProtKB-EC"/>
</dbReference>
<dbReference type="GO" id="GO:0004629">
    <property type="term" value="F:phospholipase C activity"/>
    <property type="evidence" value="ECO:0000314"/>
    <property type="project" value="TAIR"/>
</dbReference>
<dbReference type="GO" id="GO:0009395">
    <property type="term" value="P:phospholipid catabolic process"/>
    <property type="evidence" value="ECO:0000314"/>
    <property type="project" value="TAIR"/>
</dbReference>
<dbReference type="FunFam" id="3.40.720.10:FF:000011">
    <property type="entry name" value="Non-specific phospholipase C1"/>
    <property type="match status" value="1"/>
</dbReference>
<dbReference type="FunFam" id="3.40.720.10:FF:000079">
    <property type="entry name" value="Non-specific phospholipase C5"/>
    <property type="match status" value="1"/>
</dbReference>
<dbReference type="Gene3D" id="3.40.720.10">
    <property type="entry name" value="Alkaline Phosphatase, subunit A"/>
    <property type="match status" value="2"/>
</dbReference>
<dbReference type="InterPro" id="IPR017850">
    <property type="entry name" value="Alkaline_phosphatase_core_sf"/>
</dbReference>
<dbReference type="InterPro" id="IPR007312">
    <property type="entry name" value="Phosphoesterase"/>
</dbReference>
<dbReference type="PANTHER" id="PTHR31956">
    <property type="entry name" value="NON-SPECIFIC PHOSPHOLIPASE C4-RELATED"/>
    <property type="match status" value="1"/>
</dbReference>
<dbReference type="PANTHER" id="PTHR31956:SF28">
    <property type="entry name" value="NON-SPECIFIC PHOSPHOLIPASE C4-RELATED"/>
    <property type="match status" value="1"/>
</dbReference>
<dbReference type="Pfam" id="PF04185">
    <property type="entry name" value="Phosphoesterase"/>
    <property type="match status" value="1"/>
</dbReference>
<dbReference type="SUPFAM" id="SSF53649">
    <property type="entry name" value="Alkaline phosphatase-like"/>
    <property type="match status" value="1"/>
</dbReference>
<protein>
    <recommendedName>
        <fullName>Non-specific phospholipase C4</fullName>
        <ecNumber>3.1.4.3</ecNumber>
    </recommendedName>
</protein>
<organism>
    <name type="scientific">Arabidopsis thaliana</name>
    <name type="common">Mouse-ear cress</name>
    <dbReference type="NCBI Taxonomy" id="3702"/>
    <lineage>
        <taxon>Eukaryota</taxon>
        <taxon>Viridiplantae</taxon>
        <taxon>Streptophyta</taxon>
        <taxon>Embryophyta</taxon>
        <taxon>Tracheophyta</taxon>
        <taxon>Spermatophyta</taxon>
        <taxon>Magnoliopsida</taxon>
        <taxon>eudicotyledons</taxon>
        <taxon>Gunneridae</taxon>
        <taxon>Pentapetalae</taxon>
        <taxon>rosids</taxon>
        <taxon>malvids</taxon>
        <taxon>Brassicales</taxon>
        <taxon>Brassicaceae</taxon>
        <taxon>Camelineae</taxon>
        <taxon>Arabidopsis</taxon>
    </lineage>
</organism>
<feature type="chain" id="PRO_0000424786" description="Non-specific phospholipase C4">
    <location>
        <begin position="1"/>
        <end position="538"/>
    </location>
</feature>
<feature type="region of interest" description="Disordered" evidence="1">
    <location>
        <begin position="91"/>
        <end position="112"/>
    </location>
</feature>
<feature type="strand" evidence="9">
    <location>
        <begin position="16"/>
        <end position="22"/>
    </location>
</feature>
<feature type="helix" evidence="9">
    <location>
        <begin position="27"/>
        <end position="31"/>
    </location>
</feature>
<feature type="helix" evidence="9">
    <location>
        <begin position="32"/>
        <end position="36"/>
    </location>
</feature>
<feature type="strand" evidence="9">
    <location>
        <begin position="46"/>
        <end position="48"/>
    </location>
</feature>
<feature type="strand" evidence="9">
    <location>
        <begin position="51"/>
        <end position="54"/>
    </location>
</feature>
<feature type="strand" evidence="9">
    <location>
        <begin position="62"/>
        <end position="65"/>
    </location>
</feature>
<feature type="strand" evidence="9">
    <location>
        <begin position="72"/>
        <end position="75"/>
    </location>
</feature>
<feature type="helix" evidence="9">
    <location>
        <begin position="81"/>
        <end position="89"/>
    </location>
</feature>
<feature type="helix" evidence="9">
    <location>
        <begin position="110"/>
        <end position="117"/>
    </location>
</feature>
<feature type="turn" evidence="9">
    <location>
        <begin position="119"/>
        <end position="121"/>
    </location>
</feature>
<feature type="helix" evidence="9">
    <location>
        <begin position="122"/>
        <end position="125"/>
    </location>
</feature>
<feature type="helix" evidence="9">
    <location>
        <begin position="131"/>
        <end position="133"/>
    </location>
</feature>
<feature type="helix" evidence="9">
    <location>
        <begin position="135"/>
        <end position="143"/>
    </location>
</feature>
<feature type="strand" evidence="9">
    <location>
        <begin position="144"/>
        <end position="151"/>
    </location>
</feature>
<feature type="strand" evidence="9">
    <location>
        <begin position="153"/>
        <end position="156"/>
    </location>
</feature>
<feature type="helix" evidence="9">
    <location>
        <begin position="158"/>
        <end position="167"/>
    </location>
</feature>
<feature type="helix" evidence="9">
    <location>
        <begin position="178"/>
        <end position="183"/>
    </location>
</feature>
<feature type="helix" evidence="9">
    <location>
        <begin position="190"/>
        <end position="196"/>
    </location>
</feature>
<feature type="strand" evidence="9">
    <location>
        <begin position="202"/>
        <end position="208"/>
    </location>
</feature>
<feature type="helix" evidence="9">
    <location>
        <begin position="210"/>
        <end position="213"/>
    </location>
</feature>
<feature type="helix" evidence="9">
    <location>
        <begin position="215"/>
        <end position="218"/>
    </location>
</feature>
<feature type="helix" evidence="9">
    <location>
        <begin position="220"/>
        <end position="223"/>
    </location>
</feature>
<feature type="strand" evidence="9">
    <location>
        <begin position="226"/>
        <end position="228"/>
    </location>
</feature>
<feature type="helix" evidence="9">
    <location>
        <begin position="229"/>
        <end position="238"/>
    </location>
</feature>
<feature type="strand" evidence="9">
    <location>
        <begin position="244"/>
        <end position="249"/>
    </location>
</feature>
<feature type="strand" evidence="10">
    <location>
        <begin position="256"/>
        <end position="258"/>
    </location>
</feature>
<feature type="strand" evidence="9">
    <location>
        <begin position="266"/>
        <end position="268"/>
    </location>
</feature>
<feature type="helix" evidence="9">
    <location>
        <begin position="270"/>
        <end position="284"/>
    </location>
</feature>
<feature type="helix" evidence="9">
    <location>
        <begin position="289"/>
        <end position="291"/>
    </location>
</feature>
<feature type="strand" evidence="9">
    <location>
        <begin position="292"/>
        <end position="300"/>
    </location>
</feature>
<feature type="strand" evidence="9">
    <location>
        <begin position="318"/>
        <end position="320"/>
    </location>
</feature>
<feature type="turn" evidence="9">
    <location>
        <begin position="325"/>
        <end position="328"/>
    </location>
</feature>
<feature type="strand" evidence="9">
    <location>
        <begin position="340"/>
        <end position="343"/>
    </location>
</feature>
<feature type="strand" evidence="9">
    <location>
        <begin position="351"/>
        <end position="353"/>
    </location>
</feature>
<feature type="helix" evidence="9">
    <location>
        <begin position="369"/>
        <end position="377"/>
    </location>
</feature>
<feature type="turn" evidence="9">
    <location>
        <begin position="386"/>
        <end position="390"/>
    </location>
</feature>
<feature type="helix" evidence="9">
    <location>
        <begin position="395"/>
        <end position="397"/>
    </location>
</feature>
<feature type="helix" evidence="10">
    <location>
        <begin position="430"/>
        <end position="442"/>
    </location>
</feature>
<feature type="strand" evidence="10">
    <location>
        <begin position="446"/>
        <end position="448"/>
    </location>
</feature>
<feature type="helix" evidence="10">
    <location>
        <begin position="449"/>
        <end position="457"/>
    </location>
</feature>
<feature type="helix" evidence="10">
    <location>
        <begin position="461"/>
        <end position="484"/>
    </location>
</feature>
<keyword id="KW-0002">3D-structure</keyword>
<keyword id="KW-1003">Cell membrane</keyword>
<keyword id="KW-0378">Hydrolase</keyword>
<keyword id="KW-0472">Membrane</keyword>
<keyword id="KW-1185">Reference proteome</keyword>
<keyword id="KW-0346">Stress response</keyword>
<reference key="1">
    <citation type="journal article" date="2005" name="J. Biol. Chem.">
        <title>A novel phosphatidylcholine-hydrolyzing phospholipase C induced by phosphate starvation in Arabidopsis.</title>
        <authorList>
            <person name="Nakamura Y."/>
            <person name="Awai K."/>
            <person name="Masuda T."/>
            <person name="Yoshioka Y."/>
            <person name="Takamiya K."/>
            <person name="Ohta H."/>
        </authorList>
    </citation>
    <scope>NUCLEOTIDE SEQUENCE [MRNA]</scope>
    <scope>FUNCTION</scope>
    <scope>CATALYTIC ACTIVITY</scope>
    <scope>SUBCELLULAR LOCATION</scope>
    <scope>INDUCTION BY PHOSPHATE DEPRIVATION</scope>
    <scope>DISRUPTION PHENOTYPE</scope>
</reference>
<reference key="2">
    <citation type="journal article" date="2000" name="Nature">
        <title>Sequence and analysis of chromosome 3 of the plant Arabidopsis thaliana.</title>
        <authorList>
            <person name="Salanoubat M."/>
            <person name="Lemcke K."/>
            <person name="Rieger M."/>
            <person name="Ansorge W."/>
            <person name="Unseld M."/>
            <person name="Fartmann B."/>
            <person name="Valle G."/>
            <person name="Bloecker H."/>
            <person name="Perez-Alonso M."/>
            <person name="Obermaier B."/>
            <person name="Delseny M."/>
            <person name="Boutry M."/>
            <person name="Grivell L.A."/>
            <person name="Mache R."/>
            <person name="Puigdomenech P."/>
            <person name="De Simone V."/>
            <person name="Choisne N."/>
            <person name="Artiguenave F."/>
            <person name="Robert C."/>
            <person name="Brottier P."/>
            <person name="Wincker P."/>
            <person name="Cattolico L."/>
            <person name="Weissenbach J."/>
            <person name="Saurin W."/>
            <person name="Quetier F."/>
            <person name="Schaefer M."/>
            <person name="Mueller-Auer S."/>
            <person name="Gabel C."/>
            <person name="Fuchs M."/>
            <person name="Benes V."/>
            <person name="Wurmbach E."/>
            <person name="Drzonek H."/>
            <person name="Erfle H."/>
            <person name="Jordan N."/>
            <person name="Bangert S."/>
            <person name="Wiedelmann R."/>
            <person name="Kranz H."/>
            <person name="Voss H."/>
            <person name="Holland R."/>
            <person name="Brandt P."/>
            <person name="Nyakatura G."/>
            <person name="Vezzi A."/>
            <person name="D'Angelo M."/>
            <person name="Pallavicini A."/>
            <person name="Toppo S."/>
            <person name="Simionati B."/>
            <person name="Conrad A."/>
            <person name="Hornischer K."/>
            <person name="Kauer G."/>
            <person name="Loehnert T.-H."/>
            <person name="Nordsiek G."/>
            <person name="Reichelt J."/>
            <person name="Scharfe M."/>
            <person name="Schoen O."/>
            <person name="Bargues M."/>
            <person name="Terol J."/>
            <person name="Climent J."/>
            <person name="Navarro P."/>
            <person name="Collado C."/>
            <person name="Perez-Perez A."/>
            <person name="Ottenwaelder B."/>
            <person name="Duchemin D."/>
            <person name="Cooke R."/>
            <person name="Laudie M."/>
            <person name="Berger-Llauro C."/>
            <person name="Purnelle B."/>
            <person name="Masuy D."/>
            <person name="de Haan M."/>
            <person name="Maarse A.C."/>
            <person name="Alcaraz J.-P."/>
            <person name="Cottet A."/>
            <person name="Casacuberta E."/>
            <person name="Monfort A."/>
            <person name="Argiriou A."/>
            <person name="Flores M."/>
            <person name="Liguori R."/>
            <person name="Vitale D."/>
            <person name="Mannhaupt G."/>
            <person name="Haase D."/>
            <person name="Schoof H."/>
            <person name="Rudd S."/>
            <person name="Zaccaria P."/>
            <person name="Mewes H.-W."/>
            <person name="Mayer K.F.X."/>
            <person name="Kaul S."/>
            <person name="Town C.D."/>
            <person name="Koo H.L."/>
            <person name="Tallon L.J."/>
            <person name="Jenkins J."/>
            <person name="Rooney T."/>
            <person name="Rizzo M."/>
            <person name="Walts A."/>
            <person name="Utterback T."/>
            <person name="Fujii C.Y."/>
            <person name="Shea T.P."/>
            <person name="Creasy T.H."/>
            <person name="Haas B."/>
            <person name="Maiti R."/>
            <person name="Wu D."/>
            <person name="Peterson J."/>
            <person name="Van Aken S."/>
            <person name="Pai G."/>
            <person name="Militscher J."/>
            <person name="Sellers P."/>
            <person name="Gill J.E."/>
            <person name="Feldblyum T.V."/>
            <person name="Preuss D."/>
            <person name="Lin X."/>
            <person name="Nierman W.C."/>
            <person name="Salzberg S.L."/>
            <person name="White O."/>
            <person name="Venter J.C."/>
            <person name="Fraser C.M."/>
            <person name="Kaneko T."/>
            <person name="Nakamura Y."/>
            <person name="Sato S."/>
            <person name="Kato T."/>
            <person name="Asamizu E."/>
            <person name="Sasamoto S."/>
            <person name="Kimura T."/>
            <person name="Idesawa K."/>
            <person name="Kawashima K."/>
            <person name="Kishida Y."/>
            <person name="Kiyokawa C."/>
            <person name="Kohara M."/>
            <person name="Matsumoto M."/>
            <person name="Matsuno A."/>
            <person name="Muraki A."/>
            <person name="Nakayama S."/>
            <person name="Nakazaki N."/>
            <person name="Shinpo S."/>
            <person name="Takeuchi C."/>
            <person name="Wada T."/>
            <person name="Watanabe A."/>
            <person name="Yamada M."/>
            <person name="Yasuda M."/>
            <person name="Tabata S."/>
        </authorList>
    </citation>
    <scope>NUCLEOTIDE SEQUENCE [LARGE SCALE GENOMIC DNA]</scope>
    <source>
        <strain>cv. Columbia</strain>
    </source>
</reference>
<reference key="3">
    <citation type="journal article" date="2017" name="Plant J.">
        <title>Araport11: a complete reannotation of the Arabidopsis thaliana reference genome.</title>
        <authorList>
            <person name="Cheng C.Y."/>
            <person name="Krishnakumar V."/>
            <person name="Chan A.P."/>
            <person name="Thibaud-Nissen F."/>
            <person name="Schobel S."/>
            <person name="Town C.D."/>
        </authorList>
    </citation>
    <scope>GENOME REANNOTATION</scope>
    <source>
        <strain>cv. Columbia</strain>
    </source>
</reference>
<reference key="4">
    <citation type="journal article" date="2003" name="Science">
        <title>Empirical analysis of transcriptional activity in the Arabidopsis genome.</title>
        <authorList>
            <person name="Yamada K."/>
            <person name="Lim J."/>
            <person name="Dale J.M."/>
            <person name="Chen H."/>
            <person name="Shinn P."/>
            <person name="Palm C.J."/>
            <person name="Southwick A.M."/>
            <person name="Wu H.C."/>
            <person name="Kim C.J."/>
            <person name="Nguyen M."/>
            <person name="Pham P.K."/>
            <person name="Cheuk R.F."/>
            <person name="Karlin-Newmann G."/>
            <person name="Liu S.X."/>
            <person name="Lam B."/>
            <person name="Sakano H."/>
            <person name="Wu T."/>
            <person name="Yu G."/>
            <person name="Miranda M."/>
            <person name="Quach H.L."/>
            <person name="Tripp M."/>
            <person name="Chang C.H."/>
            <person name="Lee J.M."/>
            <person name="Toriumi M.J."/>
            <person name="Chan M.M."/>
            <person name="Tang C.C."/>
            <person name="Onodera C.S."/>
            <person name="Deng J.M."/>
            <person name="Akiyama K."/>
            <person name="Ansari Y."/>
            <person name="Arakawa T."/>
            <person name="Banh J."/>
            <person name="Banno F."/>
            <person name="Bowser L."/>
            <person name="Brooks S.Y."/>
            <person name="Carninci P."/>
            <person name="Chao Q."/>
            <person name="Choy N."/>
            <person name="Enju A."/>
            <person name="Goldsmith A.D."/>
            <person name="Gurjal M."/>
            <person name="Hansen N.F."/>
            <person name="Hayashizaki Y."/>
            <person name="Johnson-Hopson C."/>
            <person name="Hsuan V.W."/>
            <person name="Iida K."/>
            <person name="Karnes M."/>
            <person name="Khan S."/>
            <person name="Koesema E."/>
            <person name="Ishida J."/>
            <person name="Jiang P.X."/>
            <person name="Jones T."/>
            <person name="Kawai J."/>
            <person name="Kamiya A."/>
            <person name="Meyers C."/>
            <person name="Nakajima M."/>
            <person name="Narusaka M."/>
            <person name="Seki M."/>
            <person name="Sakurai T."/>
            <person name="Satou M."/>
            <person name="Tamse R."/>
            <person name="Vaysberg M."/>
            <person name="Wallender E.K."/>
            <person name="Wong C."/>
            <person name="Yamamura Y."/>
            <person name="Yuan S."/>
            <person name="Shinozaki K."/>
            <person name="Davis R.W."/>
            <person name="Theologis A."/>
            <person name="Ecker J.R."/>
        </authorList>
    </citation>
    <scope>NUCLEOTIDE SEQUENCE [LARGE SCALE MRNA]</scope>
    <source>
        <strain>cv. Columbia</strain>
    </source>
</reference>
<reference key="5">
    <citation type="journal article" date="2010" name="Mol. Plant">
        <title>Plant phosphatidylcholine-hydrolyzing phospholipases C NPC3 and NPC4 with roles in root development and brassinolide signaling in Arabidopsis thaliana.</title>
        <authorList>
            <person name="Wimalasekera R."/>
            <person name="Pejchar P."/>
            <person name="Holk A."/>
            <person name="Martinec J."/>
            <person name="Scherer G.F."/>
        </authorList>
    </citation>
    <scope>FUNCTION</scope>
    <scope>TISSUE SPECIFICITY</scope>
    <scope>INDUCTION</scope>
    <scope>DISRUPTION PHENOTYPE</scope>
</reference>
<reference key="6">
    <citation type="journal article" date="2010" name="Plant Cell">
        <title>Nonspecific phospholipase C NPC4 promotes responses to abscisic acid and tolerance to hyperosmotic stress in Arabidopsis.</title>
        <authorList>
            <person name="Peters C."/>
            <person name="Li M."/>
            <person name="Narasimhan R."/>
            <person name="Roth M."/>
            <person name="Welti R."/>
            <person name="Wang X."/>
        </authorList>
    </citation>
    <scope>FUNCTION</scope>
    <scope>DISRUPTION PHENOTYPE</scope>
</reference>
<reference key="7">
    <citation type="journal article" date="2011" name="J. Exp. Bot.">
        <title>The phosphatidylcholine-hydrolysing phospholipase C NPC4 plays a role in response of Arabidopsis roots to salt stress.</title>
        <authorList>
            <person name="Kocourkova D."/>
            <person name="Krckova Z."/>
            <person name="Pejchar P."/>
            <person name="Veselkova S."/>
            <person name="Valentova O."/>
            <person name="Wimalasekera R."/>
            <person name="Scherer G.F."/>
            <person name="Martinec J."/>
        </authorList>
    </citation>
    <scope>FUNCTION</scope>
    <scope>INDUCTION BY SALT</scope>
    <scope>DISRUPTION PHENOTYPE</scope>
</reference>
<reference key="8">
    <citation type="journal article" date="2013" name="New Phytol.">
        <title>ALFIN-LIKE 6 is involved in root hair elongation during phosphate deficiency in Arabidopsis.</title>
        <authorList>
            <person name="Chandrika N.N."/>
            <person name="Sundaravelpandian K."/>
            <person name="Yu S.M."/>
            <person name="Schmidt W."/>
        </authorList>
    </citation>
    <scope>DISRUPTION PHENOTYPE</scope>
</reference>
<proteinExistence type="evidence at protein level"/>
<evidence type="ECO:0000256" key="1">
    <source>
        <dbReference type="SAM" id="MobiDB-lite"/>
    </source>
</evidence>
<evidence type="ECO:0000269" key="2">
    <source>
    </source>
</evidence>
<evidence type="ECO:0000269" key="3">
    <source>
    </source>
</evidence>
<evidence type="ECO:0000269" key="4">
    <source>
    </source>
</evidence>
<evidence type="ECO:0000269" key="5">
    <source>
    </source>
</evidence>
<evidence type="ECO:0000269" key="6">
    <source>
    </source>
</evidence>
<evidence type="ECO:0000305" key="7"/>
<evidence type="ECO:0000305" key="8">
    <source>
    </source>
</evidence>
<evidence type="ECO:0007829" key="9">
    <source>
        <dbReference type="PDB" id="8HAV"/>
    </source>
</evidence>
<evidence type="ECO:0007829" key="10">
    <source>
        <dbReference type="PDB" id="8HAW"/>
    </source>
</evidence>
<sequence>MIETTKGGSGSYPIKTIVVLVQENRSFDHTLGWFKELNREIDGVTKSDPKSNTVSSSDTNSLRVVFGDQSQYVNPDPGHSIQDIYEQVFGKPWDSGKPDPNPGHPNMSGFAQNAERNKKGMSSAVMNGFKPNALPVYKELVQNFAICDRWFASVPASTQPNRLYVHSATSHGATSNDKKLLLEGFPQKTIFESLDEAGFSFGIYYQFPPSTLFYRNLRKLKYLTHFHQYGIQFKKDCKEGKLPNYVVVEQRWFDLLSTPANDDHPSHDVSEGQKLVKEVYEALRSSPQWNEILFIITYDEHGGFYDHVPTPVDGVPNPDGILGPPPYNFEFNRLGVRVPTFFISPWIEPGTVIHGPNGPYPRSQYEHSSIPATVKTIFKLKDFLSKRDSWAGTFESVITRDSPRQDCPETLSTPIKLRGTMAKENAQLSEFQEDLVIMAAGLKGDYKNEELIHKLCKETCVADASKYVTNAFEKFLEESRKARDRGCDENDIVYCVDDDDDHVVIPPQSHSEASNAAAQPKTQTSFFNKLFSCFIRHD</sequence>